<evidence type="ECO:0000255" key="1">
    <source>
        <dbReference type="HAMAP-Rule" id="MF_00578"/>
    </source>
</evidence>
<feature type="chain" id="PRO_1000129602" description="Glutamate--cysteine ligase">
    <location>
        <begin position="1"/>
        <end position="518"/>
    </location>
</feature>
<keyword id="KW-0067">ATP-binding</keyword>
<keyword id="KW-0317">Glutathione biosynthesis</keyword>
<keyword id="KW-0436">Ligase</keyword>
<keyword id="KW-0547">Nucleotide-binding</keyword>
<name>GSH1_SALDC</name>
<sequence length="518" mass="58384">MIPDVSQALAWLEKHPQALKGIQRGLERETLRVNADGTLATTGHPEALGSALTHKWITTDFAEALLEFITPVDGDIQHMLTFMRDLHRYTARKLGDERMWPLSMPCYIAEGQDIELAQYGTSNTGRFKTLYREGLKNRYGALMQTISGVHYNFSLPMAFWQAKCGVTEGEAAKEKISAGYFRLIRNYYRFGWVIPYLFGASPAICSSFLQGKPTTLPFEKTDCGMYYLPYATSLRLSDLGYTNKSQSNLGITFNDLHEYVAGLKRAIKTPSEEYARIGVEKDGKRLQINSNVLQIENELYAPIRPKRVTRSGESPSDALLRGGIEYIEVRSLDINPFSPIGVDEQQVRFLDLFMVWCVLADAPEMSSDELLCTRTNWNRVILEGRKPGLTLGIGCETAQFPLPKVGKDLFRDLKRVAQTLDSIHGGEEYQKVCDELVACFDNPELTFSARILRSMIDEGIGGTGKAFGEAYRNLLREEPLEILQEEEFIAERDASVRRQQEIEAADTEPFAAWLAKHA</sequence>
<comment type="catalytic activity">
    <reaction evidence="1">
        <text>L-cysteine + L-glutamate + ATP = gamma-L-glutamyl-L-cysteine + ADP + phosphate + H(+)</text>
        <dbReference type="Rhea" id="RHEA:13285"/>
        <dbReference type="ChEBI" id="CHEBI:15378"/>
        <dbReference type="ChEBI" id="CHEBI:29985"/>
        <dbReference type="ChEBI" id="CHEBI:30616"/>
        <dbReference type="ChEBI" id="CHEBI:35235"/>
        <dbReference type="ChEBI" id="CHEBI:43474"/>
        <dbReference type="ChEBI" id="CHEBI:58173"/>
        <dbReference type="ChEBI" id="CHEBI:456216"/>
        <dbReference type="EC" id="6.3.2.2"/>
    </reaction>
</comment>
<comment type="pathway">
    <text evidence="1">Sulfur metabolism; glutathione biosynthesis; glutathione from L-cysteine and L-glutamate: step 1/2.</text>
</comment>
<comment type="similarity">
    <text evidence="1">Belongs to the glutamate--cysteine ligase type 1 family. Type 1 subfamily.</text>
</comment>
<reference key="1">
    <citation type="journal article" date="2011" name="J. Bacteriol.">
        <title>Comparative genomics of 28 Salmonella enterica isolates: evidence for CRISPR-mediated adaptive sublineage evolution.</title>
        <authorList>
            <person name="Fricke W.F."/>
            <person name="Mammel M.K."/>
            <person name="McDermott P.F."/>
            <person name="Tartera C."/>
            <person name="White D.G."/>
            <person name="Leclerc J.E."/>
            <person name="Ravel J."/>
            <person name="Cebula T.A."/>
        </authorList>
    </citation>
    <scope>NUCLEOTIDE SEQUENCE [LARGE SCALE GENOMIC DNA]</scope>
    <source>
        <strain>CT_02021853</strain>
    </source>
</reference>
<protein>
    <recommendedName>
        <fullName evidence="1">Glutamate--cysteine ligase</fullName>
        <ecNumber evidence="1">6.3.2.2</ecNumber>
    </recommendedName>
    <alternativeName>
        <fullName evidence="1">Gamma-ECS</fullName>
        <shortName evidence="1">GCS</shortName>
    </alternativeName>
    <alternativeName>
        <fullName evidence="1">Gamma-glutamylcysteine synthetase</fullName>
    </alternativeName>
</protein>
<accession>B5FSX4</accession>
<proteinExistence type="inferred from homology"/>
<dbReference type="EC" id="6.3.2.2" evidence="1"/>
<dbReference type="EMBL" id="CP001144">
    <property type="protein sequence ID" value="ACH74618.1"/>
    <property type="molecule type" value="Genomic_DNA"/>
</dbReference>
<dbReference type="RefSeq" id="WP_000611821.1">
    <property type="nucleotide sequence ID" value="NC_011205.1"/>
</dbReference>
<dbReference type="SMR" id="B5FSX4"/>
<dbReference type="KEGG" id="sed:SeD_A3127"/>
<dbReference type="HOGENOM" id="CLU_020728_3_0_6"/>
<dbReference type="UniPathway" id="UPA00142">
    <property type="reaction ID" value="UER00209"/>
</dbReference>
<dbReference type="Proteomes" id="UP000008322">
    <property type="component" value="Chromosome"/>
</dbReference>
<dbReference type="GO" id="GO:0005829">
    <property type="term" value="C:cytosol"/>
    <property type="evidence" value="ECO:0007669"/>
    <property type="project" value="TreeGrafter"/>
</dbReference>
<dbReference type="GO" id="GO:0005524">
    <property type="term" value="F:ATP binding"/>
    <property type="evidence" value="ECO:0007669"/>
    <property type="project" value="UniProtKB-KW"/>
</dbReference>
<dbReference type="GO" id="GO:0004357">
    <property type="term" value="F:glutamate-cysteine ligase activity"/>
    <property type="evidence" value="ECO:0007669"/>
    <property type="project" value="UniProtKB-UniRule"/>
</dbReference>
<dbReference type="GO" id="GO:0046872">
    <property type="term" value="F:metal ion binding"/>
    <property type="evidence" value="ECO:0007669"/>
    <property type="project" value="TreeGrafter"/>
</dbReference>
<dbReference type="GO" id="GO:0006750">
    <property type="term" value="P:glutathione biosynthetic process"/>
    <property type="evidence" value="ECO:0007669"/>
    <property type="project" value="UniProtKB-UniRule"/>
</dbReference>
<dbReference type="FunFam" id="3.30.590.20:FF:000001">
    <property type="entry name" value="Glutamate--cysteine ligase"/>
    <property type="match status" value="1"/>
</dbReference>
<dbReference type="Gene3D" id="3.30.590.20">
    <property type="match status" value="1"/>
</dbReference>
<dbReference type="HAMAP" id="MF_00578">
    <property type="entry name" value="Glu_cys_ligase"/>
    <property type="match status" value="1"/>
</dbReference>
<dbReference type="InterPro" id="IPR014746">
    <property type="entry name" value="Gln_synth/guanido_kin_cat_dom"/>
</dbReference>
<dbReference type="InterPro" id="IPR007370">
    <property type="entry name" value="Glu_cys_ligase"/>
</dbReference>
<dbReference type="InterPro" id="IPR006334">
    <property type="entry name" value="Glut_cys_ligase"/>
</dbReference>
<dbReference type="NCBIfam" id="TIGR01434">
    <property type="entry name" value="glu_cys_ligase"/>
    <property type="match status" value="1"/>
</dbReference>
<dbReference type="PANTHER" id="PTHR38761">
    <property type="entry name" value="GLUTAMATE--CYSTEINE LIGASE"/>
    <property type="match status" value="1"/>
</dbReference>
<dbReference type="PANTHER" id="PTHR38761:SF1">
    <property type="entry name" value="GLUTAMATE--CYSTEINE LIGASE"/>
    <property type="match status" value="1"/>
</dbReference>
<dbReference type="Pfam" id="PF04262">
    <property type="entry name" value="Glu_cys_ligase"/>
    <property type="match status" value="1"/>
</dbReference>
<dbReference type="SUPFAM" id="SSF55931">
    <property type="entry name" value="Glutamine synthetase/guanido kinase"/>
    <property type="match status" value="1"/>
</dbReference>
<gene>
    <name evidence="1" type="primary">gshA</name>
    <name type="ordered locus">SeD_A3127</name>
</gene>
<organism>
    <name type="scientific">Salmonella dublin (strain CT_02021853)</name>
    <dbReference type="NCBI Taxonomy" id="439851"/>
    <lineage>
        <taxon>Bacteria</taxon>
        <taxon>Pseudomonadati</taxon>
        <taxon>Pseudomonadota</taxon>
        <taxon>Gammaproteobacteria</taxon>
        <taxon>Enterobacterales</taxon>
        <taxon>Enterobacteriaceae</taxon>
        <taxon>Salmonella</taxon>
    </lineage>
</organism>